<reference key="1">
    <citation type="submission" date="2006-08" db="EMBL/GenBank/DDBJ databases">
        <title>Complete sequence of chromosome 1 of Burkholderia cenocepacia HI2424.</title>
        <authorList>
            <person name="Copeland A."/>
            <person name="Lucas S."/>
            <person name="Lapidus A."/>
            <person name="Barry K."/>
            <person name="Detter J.C."/>
            <person name="Glavina del Rio T."/>
            <person name="Hammon N."/>
            <person name="Israni S."/>
            <person name="Pitluck S."/>
            <person name="Chain P."/>
            <person name="Malfatti S."/>
            <person name="Shin M."/>
            <person name="Vergez L."/>
            <person name="Schmutz J."/>
            <person name="Larimer F."/>
            <person name="Land M."/>
            <person name="Hauser L."/>
            <person name="Kyrpides N."/>
            <person name="Kim E."/>
            <person name="LiPuma J.J."/>
            <person name="Gonzalez C.F."/>
            <person name="Konstantinidis K."/>
            <person name="Tiedje J.M."/>
            <person name="Richardson P."/>
        </authorList>
    </citation>
    <scope>NUCLEOTIDE SEQUENCE [LARGE SCALE GENOMIC DNA]</scope>
    <source>
        <strain>HI2424</strain>
    </source>
</reference>
<feature type="chain" id="PRO_0000280838" description="Enolase">
    <location>
        <begin position="1"/>
        <end position="427"/>
    </location>
</feature>
<feature type="active site" description="Proton donor" evidence="1">
    <location>
        <position position="205"/>
    </location>
</feature>
<feature type="active site" description="Proton acceptor" evidence="1">
    <location>
        <position position="337"/>
    </location>
</feature>
<feature type="binding site" evidence="1">
    <location>
        <position position="163"/>
    </location>
    <ligand>
        <name>(2R)-2-phosphoglycerate</name>
        <dbReference type="ChEBI" id="CHEBI:58289"/>
    </ligand>
</feature>
<feature type="binding site" evidence="1">
    <location>
        <position position="242"/>
    </location>
    <ligand>
        <name>Mg(2+)</name>
        <dbReference type="ChEBI" id="CHEBI:18420"/>
    </ligand>
</feature>
<feature type="binding site" evidence="1">
    <location>
        <position position="285"/>
    </location>
    <ligand>
        <name>Mg(2+)</name>
        <dbReference type="ChEBI" id="CHEBI:18420"/>
    </ligand>
</feature>
<feature type="binding site" evidence="1">
    <location>
        <position position="312"/>
    </location>
    <ligand>
        <name>Mg(2+)</name>
        <dbReference type="ChEBI" id="CHEBI:18420"/>
    </ligand>
</feature>
<feature type="binding site" evidence="1">
    <location>
        <position position="337"/>
    </location>
    <ligand>
        <name>(2R)-2-phosphoglycerate</name>
        <dbReference type="ChEBI" id="CHEBI:58289"/>
    </ligand>
</feature>
<feature type="binding site" evidence="1">
    <location>
        <position position="366"/>
    </location>
    <ligand>
        <name>(2R)-2-phosphoglycerate</name>
        <dbReference type="ChEBI" id="CHEBI:58289"/>
    </ligand>
</feature>
<feature type="binding site" evidence="1">
    <location>
        <position position="367"/>
    </location>
    <ligand>
        <name>(2R)-2-phosphoglycerate</name>
        <dbReference type="ChEBI" id="CHEBI:58289"/>
    </ligand>
</feature>
<feature type="binding site" evidence="1">
    <location>
        <position position="388"/>
    </location>
    <ligand>
        <name>(2R)-2-phosphoglycerate</name>
        <dbReference type="ChEBI" id="CHEBI:58289"/>
    </ligand>
</feature>
<organism>
    <name type="scientific">Burkholderia cenocepacia (strain HI2424)</name>
    <dbReference type="NCBI Taxonomy" id="331272"/>
    <lineage>
        <taxon>Bacteria</taxon>
        <taxon>Pseudomonadati</taxon>
        <taxon>Pseudomonadota</taxon>
        <taxon>Betaproteobacteria</taxon>
        <taxon>Burkholderiales</taxon>
        <taxon>Burkholderiaceae</taxon>
        <taxon>Burkholderia</taxon>
        <taxon>Burkholderia cepacia complex</taxon>
    </lineage>
</organism>
<name>ENO_BURCH</name>
<protein>
    <recommendedName>
        <fullName evidence="1">Enolase</fullName>
        <ecNumber evidence="1">4.2.1.11</ecNumber>
    </recommendedName>
    <alternativeName>
        <fullName evidence="1">2-phospho-D-glycerate hydro-lyase</fullName>
    </alternativeName>
    <alternativeName>
        <fullName evidence="1">2-phosphoglycerate dehydratase</fullName>
    </alternativeName>
</protein>
<sequence>MSAIVDIIGREILDSRGNPTVECDVLLESGTMGRAAVPSGASTGSREAIELRDGEAGRYNGKGVLKAVEHINTEISEAIMGLDASEQAFLDKTLLELDGTDNKSRLGANAMLAVSMAVAKAAAEEAGLPLYRYFGGSGAMQLPVPMMNIVNGGAHANNSLDIQEFMIVPVSQPTFREALRCGAEVFHALKKILSDRGMSTAVGDEGGFAPNFGSNDECLSTILQAIEKAGYRAGEDVLLALDCAASEFYHDGKYQLAGEGLQLSSAEFTDYLATLADKFPIVSIEDGMHESDWDGWKLLTDRLGKKVQLVGDDLFVTNTRILKEGIEKGIANSILIKINQIGTLTETFAAIEMAKRAGYTAVISHRSGETEDSTIADIAVGLNAGQIKTGSLSRSDRISKYNQLLRIEEDLGDIASYPGKSAFYNLR</sequence>
<accession>A0K8N1</accession>
<gene>
    <name evidence="1" type="primary">eno</name>
    <name type="ordered locus">Bcen2424_2107</name>
</gene>
<keyword id="KW-0963">Cytoplasm</keyword>
<keyword id="KW-0324">Glycolysis</keyword>
<keyword id="KW-0456">Lyase</keyword>
<keyword id="KW-0460">Magnesium</keyword>
<keyword id="KW-0479">Metal-binding</keyword>
<keyword id="KW-0964">Secreted</keyword>
<proteinExistence type="inferred from homology"/>
<comment type="function">
    <text evidence="1">Catalyzes the reversible conversion of 2-phosphoglycerate (2-PG) into phosphoenolpyruvate (PEP). It is essential for the degradation of carbohydrates via glycolysis.</text>
</comment>
<comment type="catalytic activity">
    <reaction evidence="1">
        <text>(2R)-2-phosphoglycerate = phosphoenolpyruvate + H2O</text>
        <dbReference type="Rhea" id="RHEA:10164"/>
        <dbReference type="ChEBI" id="CHEBI:15377"/>
        <dbReference type="ChEBI" id="CHEBI:58289"/>
        <dbReference type="ChEBI" id="CHEBI:58702"/>
        <dbReference type="EC" id="4.2.1.11"/>
    </reaction>
</comment>
<comment type="cofactor">
    <cofactor evidence="1">
        <name>Mg(2+)</name>
        <dbReference type="ChEBI" id="CHEBI:18420"/>
    </cofactor>
    <text evidence="1">Binds a second Mg(2+) ion via substrate during catalysis.</text>
</comment>
<comment type="pathway">
    <text evidence="1">Carbohydrate degradation; glycolysis; pyruvate from D-glyceraldehyde 3-phosphate: step 4/5.</text>
</comment>
<comment type="subcellular location">
    <subcellularLocation>
        <location evidence="1">Cytoplasm</location>
    </subcellularLocation>
    <subcellularLocation>
        <location evidence="1">Secreted</location>
    </subcellularLocation>
    <subcellularLocation>
        <location evidence="1">Cell surface</location>
    </subcellularLocation>
    <text evidence="1">Fractions of enolase are present in both the cytoplasm and on the cell surface.</text>
</comment>
<comment type="similarity">
    <text evidence="1">Belongs to the enolase family.</text>
</comment>
<evidence type="ECO:0000255" key="1">
    <source>
        <dbReference type="HAMAP-Rule" id="MF_00318"/>
    </source>
</evidence>
<dbReference type="EC" id="4.2.1.11" evidence="1"/>
<dbReference type="EMBL" id="CP000458">
    <property type="protein sequence ID" value="ABK08858.1"/>
    <property type="molecule type" value="Genomic_DNA"/>
</dbReference>
<dbReference type="RefSeq" id="WP_006478406.1">
    <property type="nucleotide sequence ID" value="NC_008542.1"/>
</dbReference>
<dbReference type="SMR" id="A0K8N1"/>
<dbReference type="GeneID" id="93128338"/>
<dbReference type="KEGG" id="bch:Bcen2424_2107"/>
<dbReference type="HOGENOM" id="CLU_031223_2_1_4"/>
<dbReference type="UniPathway" id="UPA00109">
    <property type="reaction ID" value="UER00187"/>
</dbReference>
<dbReference type="GO" id="GO:0009986">
    <property type="term" value="C:cell surface"/>
    <property type="evidence" value="ECO:0007669"/>
    <property type="project" value="UniProtKB-SubCell"/>
</dbReference>
<dbReference type="GO" id="GO:0005576">
    <property type="term" value="C:extracellular region"/>
    <property type="evidence" value="ECO:0007669"/>
    <property type="project" value="UniProtKB-SubCell"/>
</dbReference>
<dbReference type="GO" id="GO:0000015">
    <property type="term" value="C:phosphopyruvate hydratase complex"/>
    <property type="evidence" value="ECO:0007669"/>
    <property type="project" value="InterPro"/>
</dbReference>
<dbReference type="GO" id="GO:0000287">
    <property type="term" value="F:magnesium ion binding"/>
    <property type="evidence" value="ECO:0007669"/>
    <property type="project" value="UniProtKB-UniRule"/>
</dbReference>
<dbReference type="GO" id="GO:0004634">
    <property type="term" value="F:phosphopyruvate hydratase activity"/>
    <property type="evidence" value="ECO:0007669"/>
    <property type="project" value="UniProtKB-UniRule"/>
</dbReference>
<dbReference type="GO" id="GO:0006096">
    <property type="term" value="P:glycolytic process"/>
    <property type="evidence" value="ECO:0007669"/>
    <property type="project" value="UniProtKB-UniRule"/>
</dbReference>
<dbReference type="CDD" id="cd03313">
    <property type="entry name" value="enolase"/>
    <property type="match status" value="1"/>
</dbReference>
<dbReference type="FunFam" id="3.20.20.120:FF:000001">
    <property type="entry name" value="Enolase"/>
    <property type="match status" value="1"/>
</dbReference>
<dbReference type="FunFam" id="3.30.390.10:FF:000001">
    <property type="entry name" value="Enolase"/>
    <property type="match status" value="1"/>
</dbReference>
<dbReference type="Gene3D" id="3.20.20.120">
    <property type="entry name" value="Enolase-like C-terminal domain"/>
    <property type="match status" value="1"/>
</dbReference>
<dbReference type="Gene3D" id="3.30.390.10">
    <property type="entry name" value="Enolase-like, N-terminal domain"/>
    <property type="match status" value="1"/>
</dbReference>
<dbReference type="HAMAP" id="MF_00318">
    <property type="entry name" value="Enolase"/>
    <property type="match status" value="1"/>
</dbReference>
<dbReference type="InterPro" id="IPR000941">
    <property type="entry name" value="Enolase"/>
</dbReference>
<dbReference type="InterPro" id="IPR036849">
    <property type="entry name" value="Enolase-like_C_sf"/>
</dbReference>
<dbReference type="InterPro" id="IPR029017">
    <property type="entry name" value="Enolase-like_N"/>
</dbReference>
<dbReference type="InterPro" id="IPR020810">
    <property type="entry name" value="Enolase_C"/>
</dbReference>
<dbReference type="InterPro" id="IPR020809">
    <property type="entry name" value="Enolase_CS"/>
</dbReference>
<dbReference type="InterPro" id="IPR020811">
    <property type="entry name" value="Enolase_N"/>
</dbReference>
<dbReference type="NCBIfam" id="TIGR01060">
    <property type="entry name" value="eno"/>
    <property type="match status" value="1"/>
</dbReference>
<dbReference type="PANTHER" id="PTHR11902">
    <property type="entry name" value="ENOLASE"/>
    <property type="match status" value="1"/>
</dbReference>
<dbReference type="PANTHER" id="PTHR11902:SF1">
    <property type="entry name" value="ENOLASE"/>
    <property type="match status" value="1"/>
</dbReference>
<dbReference type="Pfam" id="PF00113">
    <property type="entry name" value="Enolase_C"/>
    <property type="match status" value="1"/>
</dbReference>
<dbReference type="Pfam" id="PF03952">
    <property type="entry name" value="Enolase_N"/>
    <property type="match status" value="1"/>
</dbReference>
<dbReference type="PIRSF" id="PIRSF001400">
    <property type="entry name" value="Enolase"/>
    <property type="match status" value="1"/>
</dbReference>
<dbReference type="PRINTS" id="PR00148">
    <property type="entry name" value="ENOLASE"/>
</dbReference>
<dbReference type="SFLD" id="SFLDF00002">
    <property type="entry name" value="enolase"/>
    <property type="match status" value="1"/>
</dbReference>
<dbReference type="SFLD" id="SFLDG00178">
    <property type="entry name" value="enolase"/>
    <property type="match status" value="1"/>
</dbReference>
<dbReference type="SMART" id="SM01192">
    <property type="entry name" value="Enolase_C"/>
    <property type="match status" value="1"/>
</dbReference>
<dbReference type="SMART" id="SM01193">
    <property type="entry name" value="Enolase_N"/>
    <property type="match status" value="1"/>
</dbReference>
<dbReference type="SUPFAM" id="SSF51604">
    <property type="entry name" value="Enolase C-terminal domain-like"/>
    <property type="match status" value="1"/>
</dbReference>
<dbReference type="SUPFAM" id="SSF54826">
    <property type="entry name" value="Enolase N-terminal domain-like"/>
    <property type="match status" value="1"/>
</dbReference>
<dbReference type="PROSITE" id="PS00164">
    <property type="entry name" value="ENOLASE"/>
    <property type="match status" value="1"/>
</dbReference>